<evidence type="ECO:0000255" key="1">
    <source>
        <dbReference type="HAMAP-Rule" id="MF_00251"/>
    </source>
</evidence>
<evidence type="ECO:0000305" key="2"/>
<sequence>MKVKNSLRSLKNRHRDCRVVRRKGRVYVINKTQRRFKARQG</sequence>
<dbReference type="EMBL" id="CP000264">
    <property type="protein sequence ID" value="ABD56914.1"/>
    <property type="molecule type" value="Genomic_DNA"/>
</dbReference>
<dbReference type="SMR" id="Q28K48"/>
<dbReference type="STRING" id="290400.Jann_3997"/>
<dbReference type="KEGG" id="jan:Jann_3997"/>
<dbReference type="eggNOG" id="COG0257">
    <property type="taxonomic scope" value="Bacteria"/>
</dbReference>
<dbReference type="HOGENOM" id="CLU_135723_3_2_5"/>
<dbReference type="OrthoDB" id="9801558at2"/>
<dbReference type="Proteomes" id="UP000008326">
    <property type="component" value="Chromosome"/>
</dbReference>
<dbReference type="GO" id="GO:1990904">
    <property type="term" value="C:ribonucleoprotein complex"/>
    <property type="evidence" value="ECO:0007669"/>
    <property type="project" value="UniProtKB-KW"/>
</dbReference>
<dbReference type="GO" id="GO:0005840">
    <property type="term" value="C:ribosome"/>
    <property type="evidence" value="ECO:0007669"/>
    <property type="project" value="UniProtKB-KW"/>
</dbReference>
<dbReference type="GO" id="GO:0003735">
    <property type="term" value="F:structural constituent of ribosome"/>
    <property type="evidence" value="ECO:0007669"/>
    <property type="project" value="InterPro"/>
</dbReference>
<dbReference type="GO" id="GO:0006412">
    <property type="term" value="P:translation"/>
    <property type="evidence" value="ECO:0007669"/>
    <property type="project" value="UniProtKB-UniRule"/>
</dbReference>
<dbReference type="HAMAP" id="MF_00251">
    <property type="entry name" value="Ribosomal_bL36"/>
    <property type="match status" value="1"/>
</dbReference>
<dbReference type="InterPro" id="IPR000473">
    <property type="entry name" value="Ribosomal_bL36"/>
</dbReference>
<dbReference type="InterPro" id="IPR035977">
    <property type="entry name" value="Ribosomal_bL36_sp"/>
</dbReference>
<dbReference type="InterPro" id="IPR047621">
    <property type="entry name" value="Ribosomal_L36_bact"/>
</dbReference>
<dbReference type="NCBIfam" id="NF002021">
    <property type="entry name" value="PRK00831.1"/>
    <property type="match status" value="1"/>
</dbReference>
<dbReference type="NCBIfam" id="TIGR01022">
    <property type="entry name" value="rpmJ_bact"/>
    <property type="match status" value="1"/>
</dbReference>
<dbReference type="PANTHER" id="PTHR47781">
    <property type="entry name" value="50S RIBOSOMAL PROTEIN L36 2"/>
    <property type="match status" value="1"/>
</dbReference>
<dbReference type="PANTHER" id="PTHR47781:SF1">
    <property type="entry name" value="LARGE RIBOSOMAL SUBUNIT PROTEIN BL36B"/>
    <property type="match status" value="1"/>
</dbReference>
<dbReference type="Pfam" id="PF00444">
    <property type="entry name" value="Ribosomal_L36"/>
    <property type="match status" value="1"/>
</dbReference>
<dbReference type="SUPFAM" id="SSF57840">
    <property type="entry name" value="Ribosomal protein L36"/>
    <property type="match status" value="1"/>
</dbReference>
<dbReference type="PROSITE" id="PS00828">
    <property type="entry name" value="RIBOSOMAL_L36"/>
    <property type="match status" value="1"/>
</dbReference>
<comment type="similarity">
    <text evidence="1">Belongs to the bacterial ribosomal protein bL36 family.</text>
</comment>
<accession>Q28K48</accession>
<reference key="1">
    <citation type="submission" date="2006-02" db="EMBL/GenBank/DDBJ databases">
        <title>Complete sequence of chromosome of Jannaschia sp. CCS1.</title>
        <authorList>
            <consortium name="US DOE Joint Genome Institute"/>
            <person name="Copeland A."/>
            <person name="Lucas S."/>
            <person name="Lapidus A."/>
            <person name="Barry K."/>
            <person name="Detter J.C."/>
            <person name="Glavina del Rio T."/>
            <person name="Hammon N."/>
            <person name="Israni S."/>
            <person name="Pitluck S."/>
            <person name="Brettin T."/>
            <person name="Bruce D."/>
            <person name="Han C."/>
            <person name="Tapia R."/>
            <person name="Gilna P."/>
            <person name="Chertkov O."/>
            <person name="Saunders E."/>
            <person name="Schmutz J."/>
            <person name="Larimer F."/>
            <person name="Land M."/>
            <person name="Kyrpides N."/>
            <person name="Lykidis A."/>
            <person name="Moran M.A."/>
            <person name="Belas R."/>
            <person name="Ye W."/>
            <person name="Buchan A."/>
            <person name="Gonzalez J.M."/>
            <person name="Schell M.A."/>
            <person name="Richardson P."/>
        </authorList>
    </citation>
    <scope>NUCLEOTIDE SEQUENCE [LARGE SCALE GENOMIC DNA]</scope>
    <source>
        <strain>CCS1</strain>
    </source>
</reference>
<keyword id="KW-1185">Reference proteome</keyword>
<keyword id="KW-0687">Ribonucleoprotein</keyword>
<keyword id="KW-0689">Ribosomal protein</keyword>
<proteinExistence type="inferred from homology"/>
<name>RL36_JANSC</name>
<protein>
    <recommendedName>
        <fullName evidence="1">Large ribosomal subunit protein bL36</fullName>
    </recommendedName>
    <alternativeName>
        <fullName evidence="2">50S ribosomal protein L36</fullName>
    </alternativeName>
</protein>
<feature type="chain" id="PRO_0000302219" description="Large ribosomal subunit protein bL36">
    <location>
        <begin position="1"/>
        <end position="41"/>
    </location>
</feature>
<gene>
    <name evidence="1" type="primary">rpmJ</name>
    <name type="ordered locus">Jann_3997</name>
</gene>
<organism>
    <name type="scientific">Jannaschia sp. (strain CCS1)</name>
    <dbReference type="NCBI Taxonomy" id="290400"/>
    <lineage>
        <taxon>Bacteria</taxon>
        <taxon>Pseudomonadati</taxon>
        <taxon>Pseudomonadota</taxon>
        <taxon>Alphaproteobacteria</taxon>
        <taxon>Rhodobacterales</taxon>
        <taxon>Roseobacteraceae</taxon>
        <taxon>Jannaschia</taxon>
    </lineage>
</organism>